<keyword id="KW-0963">Cytoplasm</keyword>
<keyword id="KW-0312">Gluconeogenesis</keyword>
<keyword id="KW-0324">Glycolysis</keyword>
<keyword id="KW-0413">Isomerase</keyword>
<name>G6PI_STRA3</name>
<gene>
    <name evidence="1" type="primary">pgi</name>
    <name type="ordered locus">gbs0437</name>
</gene>
<accession>P64195</accession>
<accession>Q8E1F3</accession>
<accession>Q8E6X1</accession>
<comment type="function">
    <text evidence="1">Catalyzes the reversible isomerization of glucose-6-phosphate to fructose-6-phosphate.</text>
</comment>
<comment type="catalytic activity">
    <reaction evidence="1">
        <text>alpha-D-glucose 6-phosphate = beta-D-fructose 6-phosphate</text>
        <dbReference type="Rhea" id="RHEA:11816"/>
        <dbReference type="ChEBI" id="CHEBI:57634"/>
        <dbReference type="ChEBI" id="CHEBI:58225"/>
        <dbReference type="EC" id="5.3.1.9"/>
    </reaction>
</comment>
<comment type="pathway">
    <text evidence="1">Carbohydrate biosynthesis; gluconeogenesis.</text>
</comment>
<comment type="pathway">
    <text evidence="1">Carbohydrate degradation; glycolysis; D-glyceraldehyde 3-phosphate and glycerone phosphate from D-glucose: step 2/4.</text>
</comment>
<comment type="subcellular location">
    <subcellularLocation>
        <location evidence="1">Cytoplasm</location>
    </subcellularLocation>
</comment>
<comment type="similarity">
    <text evidence="1">Belongs to the GPI family.</text>
</comment>
<proteinExistence type="inferred from homology"/>
<protein>
    <recommendedName>
        <fullName evidence="1">Glucose-6-phosphate isomerase</fullName>
        <shortName evidence="1">GPI</shortName>
        <ecNumber evidence="1">5.3.1.9</ecNumber>
    </recommendedName>
    <alternativeName>
        <fullName evidence="1">Phosphoglucose isomerase</fullName>
        <shortName evidence="1">PGI</shortName>
    </alternativeName>
    <alternativeName>
        <fullName evidence="1">Phosphohexose isomerase</fullName>
        <shortName evidence="1">PHI</shortName>
    </alternativeName>
</protein>
<evidence type="ECO:0000255" key="1">
    <source>
        <dbReference type="HAMAP-Rule" id="MF_00473"/>
    </source>
</evidence>
<organism>
    <name type="scientific">Streptococcus agalactiae serotype III (strain NEM316)</name>
    <dbReference type="NCBI Taxonomy" id="211110"/>
    <lineage>
        <taxon>Bacteria</taxon>
        <taxon>Bacillati</taxon>
        <taxon>Bacillota</taxon>
        <taxon>Bacilli</taxon>
        <taxon>Lactobacillales</taxon>
        <taxon>Streptococcaceae</taxon>
        <taxon>Streptococcus</taxon>
    </lineage>
</organism>
<sequence>MTHITFDYSKVLGQFVGEHELDYLQPQVSAADAFLRQGTGPGSDFLGWMDLPENYDKEEFSRIQKAAEKIKSDSEVLVVIGIGGSYLGAKAAIDFLNNHFANLQTAEERKAPQILYAGNSISSTYLADLVEYVQDKEFSVNVISKSGTTTEPAIAFRVFKELLVKKYGQEEANKRIYATTDKVKGAVKVEADANNWETFVVPDNVGGRFSVLTAVGLLPIAASGADITALMEGANAARKDLSSDKISENIAYQYAAVRNVLYRKGYITEILANYEPSLQYFGEWWKQLAGESEGKDQKGIYPTSANFSTDLHSLGQFIQEGYRNLFETVVRVEKPRKNVTIPELTEDLDGLGYLQGKDVDFVNKKATDGVLLAHTDGGVPNMFVTLPTQDAYTLGYTIYFFELAIGLSGYLNSVNPFDQPGVEAYKRNMFALLGKPGFEELSAELNARL</sequence>
<dbReference type="EC" id="5.3.1.9" evidence="1"/>
<dbReference type="EMBL" id="AL766845">
    <property type="protein sequence ID" value="CAD46081.1"/>
    <property type="molecule type" value="Genomic_DNA"/>
</dbReference>
<dbReference type="RefSeq" id="WP_000148892.1">
    <property type="nucleotide sequence ID" value="NC_004368.1"/>
</dbReference>
<dbReference type="SMR" id="P64195"/>
<dbReference type="KEGG" id="san:pgi"/>
<dbReference type="eggNOG" id="COG0166">
    <property type="taxonomic scope" value="Bacteria"/>
</dbReference>
<dbReference type="HOGENOM" id="CLU_037303_0_1_9"/>
<dbReference type="UniPathway" id="UPA00109">
    <property type="reaction ID" value="UER00181"/>
</dbReference>
<dbReference type="UniPathway" id="UPA00138"/>
<dbReference type="Proteomes" id="UP000000823">
    <property type="component" value="Chromosome"/>
</dbReference>
<dbReference type="GO" id="GO:0005829">
    <property type="term" value="C:cytosol"/>
    <property type="evidence" value="ECO:0007669"/>
    <property type="project" value="TreeGrafter"/>
</dbReference>
<dbReference type="GO" id="GO:0097367">
    <property type="term" value="F:carbohydrate derivative binding"/>
    <property type="evidence" value="ECO:0007669"/>
    <property type="project" value="InterPro"/>
</dbReference>
<dbReference type="GO" id="GO:0004347">
    <property type="term" value="F:glucose-6-phosphate isomerase activity"/>
    <property type="evidence" value="ECO:0007669"/>
    <property type="project" value="UniProtKB-UniRule"/>
</dbReference>
<dbReference type="GO" id="GO:0048029">
    <property type="term" value="F:monosaccharide binding"/>
    <property type="evidence" value="ECO:0007669"/>
    <property type="project" value="TreeGrafter"/>
</dbReference>
<dbReference type="GO" id="GO:0006094">
    <property type="term" value="P:gluconeogenesis"/>
    <property type="evidence" value="ECO:0007669"/>
    <property type="project" value="UniProtKB-UniRule"/>
</dbReference>
<dbReference type="GO" id="GO:0051156">
    <property type="term" value="P:glucose 6-phosphate metabolic process"/>
    <property type="evidence" value="ECO:0007669"/>
    <property type="project" value="TreeGrafter"/>
</dbReference>
<dbReference type="GO" id="GO:0006096">
    <property type="term" value="P:glycolytic process"/>
    <property type="evidence" value="ECO:0007669"/>
    <property type="project" value="UniProtKB-UniRule"/>
</dbReference>
<dbReference type="CDD" id="cd05015">
    <property type="entry name" value="SIS_PGI_1"/>
    <property type="match status" value="1"/>
</dbReference>
<dbReference type="CDD" id="cd05016">
    <property type="entry name" value="SIS_PGI_2"/>
    <property type="match status" value="1"/>
</dbReference>
<dbReference type="FunFam" id="3.40.50.10490:FF:000015">
    <property type="entry name" value="Glucose-6-phosphate isomerase"/>
    <property type="match status" value="1"/>
</dbReference>
<dbReference type="FunFam" id="3.40.50.10490:FF:000016">
    <property type="entry name" value="Glucose-6-phosphate isomerase"/>
    <property type="match status" value="1"/>
</dbReference>
<dbReference type="Gene3D" id="3.40.50.10490">
    <property type="entry name" value="Glucose-6-phosphate isomerase like protein, domain 1"/>
    <property type="match status" value="3"/>
</dbReference>
<dbReference type="HAMAP" id="MF_00473">
    <property type="entry name" value="G6P_isomerase"/>
    <property type="match status" value="1"/>
</dbReference>
<dbReference type="InterPro" id="IPR001672">
    <property type="entry name" value="G6P_Isomerase"/>
</dbReference>
<dbReference type="InterPro" id="IPR018189">
    <property type="entry name" value="Phosphoglucose_isomerase_CS"/>
</dbReference>
<dbReference type="InterPro" id="IPR046348">
    <property type="entry name" value="SIS_dom_sf"/>
</dbReference>
<dbReference type="InterPro" id="IPR035476">
    <property type="entry name" value="SIS_PGI_1"/>
</dbReference>
<dbReference type="InterPro" id="IPR035482">
    <property type="entry name" value="SIS_PGI_2"/>
</dbReference>
<dbReference type="NCBIfam" id="NF010697">
    <property type="entry name" value="PRK14097.1"/>
    <property type="match status" value="1"/>
</dbReference>
<dbReference type="PANTHER" id="PTHR11469">
    <property type="entry name" value="GLUCOSE-6-PHOSPHATE ISOMERASE"/>
    <property type="match status" value="1"/>
</dbReference>
<dbReference type="PANTHER" id="PTHR11469:SF1">
    <property type="entry name" value="GLUCOSE-6-PHOSPHATE ISOMERASE"/>
    <property type="match status" value="1"/>
</dbReference>
<dbReference type="Pfam" id="PF00342">
    <property type="entry name" value="PGI"/>
    <property type="match status" value="1"/>
</dbReference>
<dbReference type="PRINTS" id="PR00662">
    <property type="entry name" value="G6PISOMERASE"/>
</dbReference>
<dbReference type="SUPFAM" id="SSF53697">
    <property type="entry name" value="SIS domain"/>
    <property type="match status" value="1"/>
</dbReference>
<dbReference type="PROSITE" id="PS00765">
    <property type="entry name" value="P_GLUCOSE_ISOMERASE_1"/>
    <property type="match status" value="1"/>
</dbReference>
<dbReference type="PROSITE" id="PS00174">
    <property type="entry name" value="P_GLUCOSE_ISOMERASE_2"/>
    <property type="match status" value="1"/>
</dbReference>
<dbReference type="PROSITE" id="PS51463">
    <property type="entry name" value="P_GLUCOSE_ISOMERASE_3"/>
    <property type="match status" value="1"/>
</dbReference>
<reference key="1">
    <citation type="journal article" date="2002" name="Mol. Microbiol.">
        <title>Genome sequence of Streptococcus agalactiae, a pathogen causing invasive neonatal disease.</title>
        <authorList>
            <person name="Glaser P."/>
            <person name="Rusniok C."/>
            <person name="Buchrieser C."/>
            <person name="Chevalier F."/>
            <person name="Frangeul L."/>
            <person name="Msadek T."/>
            <person name="Zouine M."/>
            <person name="Couve E."/>
            <person name="Lalioui L."/>
            <person name="Poyart C."/>
            <person name="Trieu-Cuot P."/>
            <person name="Kunst F."/>
        </authorList>
    </citation>
    <scope>NUCLEOTIDE SEQUENCE [LARGE SCALE GENOMIC DNA]</scope>
    <source>
        <strain>NEM316</strain>
    </source>
</reference>
<feature type="chain" id="PRO_0000180735" description="Glucose-6-phosphate isomerase">
    <location>
        <begin position="1"/>
        <end position="449"/>
    </location>
</feature>
<feature type="active site" description="Proton donor" evidence="1">
    <location>
        <position position="291"/>
    </location>
</feature>
<feature type="active site" evidence="1">
    <location>
        <position position="312"/>
    </location>
</feature>
<feature type="active site" evidence="1">
    <location>
        <position position="426"/>
    </location>
</feature>